<dbReference type="EC" id="2.1.3.2" evidence="1"/>
<dbReference type="EMBL" id="CP000269">
    <property type="protein sequence ID" value="ABR89121.1"/>
    <property type="molecule type" value="Genomic_DNA"/>
</dbReference>
<dbReference type="RefSeq" id="WP_012080796.1">
    <property type="nucleotide sequence ID" value="NC_009659.1"/>
</dbReference>
<dbReference type="SMR" id="A6T290"/>
<dbReference type="STRING" id="375286.mma_2947"/>
<dbReference type="KEGG" id="mms:mma_2947"/>
<dbReference type="eggNOG" id="COG0540">
    <property type="taxonomic scope" value="Bacteria"/>
</dbReference>
<dbReference type="HOGENOM" id="CLU_043846_2_0_4"/>
<dbReference type="OrthoDB" id="9774690at2"/>
<dbReference type="UniPathway" id="UPA00070">
    <property type="reaction ID" value="UER00116"/>
</dbReference>
<dbReference type="Proteomes" id="UP000006388">
    <property type="component" value="Chromosome"/>
</dbReference>
<dbReference type="GO" id="GO:0005829">
    <property type="term" value="C:cytosol"/>
    <property type="evidence" value="ECO:0007669"/>
    <property type="project" value="TreeGrafter"/>
</dbReference>
<dbReference type="GO" id="GO:0016597">
    <property type="term" value="F:amino acid binding"/>
    <property type="evidence" value="ECO:0007669"/>
    <property type="project" value="InterPro"/>
</dbReference>
<dbReference type="GO" id="GO:0004070">
    <property type="term" value="F:aspartate carbamoyltransferase activity"/>
    <property type="evidence" value="ECO:0007669"/>
    <property type="project" value="UniProtKB-UniRule"/>
</dbReference>
<dbReference type="GO" id="GO:0006207">
    <property type="term" value="P:'de novo' pyrimidine nucleobase biosynthetic process"/>
    <property type="evidence" value="ECO:0007669"/>
    <property type="project" value="InterPro"/>
</dbReference>
<dbReference type="GO" id="GO:0044205">
    <property type="term" value="P:'de novo' UMP biosynthetic process"/>
    <property type="evidence" value="ECO:0007669"/>
    <property type="project" value="UniProtKB-UniRule"/>
</dbReference>
<dbReference type="GO" id="GO:0006520">
    <property type="term" value="P:amino acid metabolic process"/>
    <property type="evidence" value="ECO:0007669"/>
    <property type="project" value="InterPro"/>
</dbReference>
<dbReference type="FunFam" id="3.40.50.1370:FF:000007">
    <property type="entry name" value="Aspartate carbamoyltransferase"/>
    <property type="match status" value="1"/>
</dbReference>
<dbReference type="Gene3D" id="3.40.50.1370">
    <property type="entry name" value="Aspartate/ornithine carbamoyltransferase"/>
    <property type="match status" value="2"/>
</dbReference>
<dbReference type="HAMAP" id="MF_00001">
    <property type="entry name" value="Asp_carb_tr"/>
    <property type="match status" value="1"/>
</dbReference>
<dbReference type="InterPro" id="IPR006132">
    <property type="entry name" value="Asp/Orn_carbamoyltranf_P-bd"/>
</dbReference>
<dbReference type="InterPro" id="IPR006130">
    <property type="entry name" value="Asp/Orn_carbamoylTrfase"/>
</dbReference>
<dbReference type="InterPro" id="IPR036901">
    <property type="entry name" value="Asp/Orn_carbamoylTrfase_sf"/>
</dbReference>
<dbReference type="InterPro" id="IPR002082">
    <property type="entry name" value="Asp_carbamoyltransf"/>
</dbReference>
<dbReference type="InterPro" id="IPR006131">
    <property type="entry name" value="Asp_carbamoyltransf_Asp/Orn-bd"/>
</dbReference>
<dbReference type="NCBIfam" id="TIGR00670">
    <property type="entry name" value="asp_carb_tr"/>
    <property type="match status" value="1"/>
</dbReference>
<dbReference type="NCBIfam" id="NF002032">
    <property type="entry name" value="PRK00856.1"/>
    <property type="match status" value="1"/>
</dbReference>
<dbReference type="PANTHER" id="PTHR45753:SF6">
    <property type="entry name" value="ASPARTATE CARBAMOYLTRANSFERASE"/>
    <property type="match status" value="1"/>
</dbReference>
<dbReference type="PANTHER" id="PTHR45753">
    <property type="entry name" value="ORNITHINE CARBAMOYLTRANSFERASE, MITOCHONDRIAL"/>
    <property type="match status" value="1"/>
</dbReference>
<dbReference type="Pfam" id="PF00185">
    <property type="entry name" value="OTCace"/>
    <property type="match status" value="1"/>
</dbReference>
<dbReference type="Pfam" id="PF02729">
    <property type="entry name" value="OTCace_N"/>
    <property type="match status" value="1"/>
</dbReference>
<dbReference type="PRINTS" id="PR00100">
    <property type="entry name" value="AOTCASE"/>
</dbReference>
<dbReference type="PRINTS" id="PR00101">
    <property type="entry name" value="ATCASE"/>
</dbReference>
<dbReference type="SUPFAM" id="SSF53671">
    <property type="entry name" value="Aspartate/ornithine carbamoyltransferase"/>
    <property type="match status" value="1"/>
</dbReference>
<dbReference type="PROSITE" id="PS00097">
    <property type="entry name" value="CARBAMOYLTRANSFERASE"/>
    <property type="match status" value="1"/>
</dbReference>
<comment type="function">
    <text evidence="1">Catalyzes the condensation of carbamoyl phosphate and aspartate to form carbamoyl aspartate and inorganic phosphate, the committed step in the de novo pyrimidine nucleotide biosynthesis pathway.</text>
</comment>
<comment type="catalytic activity">
    <reaction evidence="1">
        <text>carbamoyl phosphate + L-aspartate = N-carbamoyl-L-aspartate + phosphate + H(+)</text>
        <dbReference type="Rhea" id="RHEA:20013"/>
        <dbReference type="ChEBI" id="CHEBI:15378"/>
        <dbReference type="ChEBI" id="CHEBI:29991"/>
        <dbReference type="ChEBI" id="CHEBI:32814"/>
        <dbReference type="ChEBI" id="CHEBI:43474"/>
        <dbReference type="ChEBI" id="CHEBI:58228"/>
        <dbReference type="EC" id="2.1.3.2"/>
    </reaction>
</comment>
<comment type="pathway">
    <text evidence="1">Pyrimidine metabolism; UMP biosynthesis via de novo pathway; (S)-dihydroorotate from bicarbonate: step 2/3.</text>
</comment>
<comment type="subunit">
    <text evidence="1">Heterododecamer (2C3:3R2) of six catalytic PyrB chains organized as two trimers (C3), and six regulatory PyrI chains organized as three dimers (R2).</text>
</comment>
<comment type="similarity">
    <text evidence="1">Belongs to the aspartate/ornithine carbamoyltransferase superfamily. ATCase family.</text>
</comment>
<keyword id="KW-0665">Pyrimidine biosynthesis</keyword>
<keyword id="KW-0808">Transferase</keyword>
<accession>A6T290</accession>
<sequence>MFNPQLNKNGELQHLLTIEGLPKANILHILDTASSFVSIGDREVKKVPLMRGKSVFNLFFENSTRTRTTFEIASKRLSADVINLNIQASSSSKGESLLDTIDNLSAMHADMFVVRHAQSGAPYLIAKHLSDTSQSHVHVVNAGDGRHAHPTQGLLDMYTIRHYKKDFSNLTVAIVGDILHSRVARSDIHALTTLGVPEIRAIGPRTLLPSGLEQMGVRVFTDINKGLKDVDVIIMLRLQNERMSGALLPSAQEFFKSYGLTTERLALAKPDAIVMHPGPMNRGVEIESAVADGTQAVILPQVTFGIAVRMAVMSILAGN</sequence>
<proteinExistence type="inferred from homology"/>
<protein>
    <recommendedName>
        <fullName evidence="1">Aspartate carbamoyltransferase catalytic subunit</fullName>
        <ecNumber evidence="1">2.1.3.2</ecNumber>
    </recommendedName>
    <alternativeName>
        <fullName evidence="1">Aspartate transcarbamylase</fullName>
        <shortName evidence="1">ATCase</shortName>
    </alternativeName>
</protein>
<reference key="1">
    <citation type="journal article" date="2007" name="PLoS Genet.">
        <title>Genome analysis of Minibacterium massiliensis highlights the convergent evolution of water-living bacteria.</title>
        <authorList>
            <person name="Audic S."/>
            <person name="Robert C."/>
            <person name="Campagna B."/>
            <person name="Parinello H."/>
            <person name="Claverie J.-M."/>
            <person name="Raoult D."/>
            <person name="Drancourt M."/>
        </authorList>
    </citation>
    <scope>NUCLEOTIDE SEQUENCE [LARGE SCALE GENOMIC DNA]</scope>
    <source>
        <strain>Marseille</strain>
    </source>
</reference>
<gene>
    <name evidence="1" type="primary">pyrB</name>
    <name type="ordered locus">mma_2947</name>
</gene>
<organism>
    <name type="scientific">Janthinobacterium sp. (strain Marseille)</name>
    <name type="common">Minibacterium massiliensis</name>
    <dbReference type="NCBI Taxonomy" id="375286"/>
    <lineage>
        <taxon>Bacteria</taxon>
        <taxon>Pseudomonadati</taxon>
        <taxon>Pseudomonadota</taxon>
        <taxon>Betaproteobacteria</taxon>
        <taxon>Burkholderiales</taxon>
        <taxon>Oxalobacteraceae</taxon>
        <taxon>Janthinobacterium</taxon>
    </lineage>
</organism>
<evidence type="ECO:0000255" key="1">
    <source>
        <dbReference type="HAMAP-Rule" id="MF_00001"/>
    </source>
</evidence>
<name>PYRB_JANMA</name>
<feature type="chain" id="PRO_1000000010" description="Aspartate carbamoyltransferase catalytic subunit">
    <location>
        <begin position="1"/>
        <end position="319"/>
    </location>
</feature>
<feature type="binding site" evidence="1">
    <location>
        <position position="65"/>
    </location>
    <ligand>
        <name>carbamoyl phosphate</name>
        <dbReference type="ChEBI" id="CHEBI:58228"/>
    </ligand>
</feature>
<feature type="binding site" evidence="1">
    <location>
        <position position="66"/>
    </location>
    <ligand>
        <name>carbamoyl phosphate</name>
        <dbReference type="ChEBI" id="CHEBI:58228"/>
    </ligand>
</feature>
<feature type="binding site" evidence="1">
    <location>
        <position position="93"/>
    </location>
    <ligand>
        <name>L-aspartate</name>
        <dbReference type="ChEBI" id="CHEBI:29991"/>
    </ligand>
</feature>
<feature type="binding site" evidence="1">
    <location>
        <position position="115"/>
    </location>
    <ligand>
        <name>carbamoyl phosphate</name>
        <dbReference type="ChEBI" id="CHEBI:58228"/>
    </ligand>
</feature>
<feature type="binding site" evidence="1">
    <location>
        <position position="149"/>
    </location>
    <ligand>
        <name>carbamoyl phosphate</name>
        <dbReference type="ChEBI" id="CHEBI:58228"/>
    </ligand>
</feature>
<feature type="binding site" evidence="1">
    <location>
        <position position="152"/>
    </location>
    <ligand>
        <name>carbamoyl phosphate</name>
        <dbReference type="ChEBI" id="CHEBI:58228"/>
    </ligand>
</feature>
<feature type="binding site" evidence="1">
    <location>
        <position position="182"/>
    </location>
    <ligand>
        <name>L-aspartate</name>
        <dbReference type="ChEBI" id="CHEBI:29991"/>
    </ligand>
</feature>
<feature type="binding site" evidence="1">
    <location>
        <position position="237"/>
    </location>
    <ligand>
        <name>L-aspartate</name>
        <dbReference type="ChEBI" id="CHEBI:29991"/>
    </ligand>
</feature>
<feature type="binding site" evidence="1">
    <location>
        <position position="278"/>
    </location>
    <ligand>
        <name>carbamoyl phosphate</name>
        <dbReference type="ChEBI" id="CHEBI:58228"/>
    </ligand>
</feature>
<feature type="binding site" evidence="1">
    <location>
        <position position="279"/>
    </location>
    <ligand>
        <name>carbamoyl phosphate</name>
        <dbReference type="ChEBI" id="CHEBI:58228"/>
    </ligand>
</feature>